<comment type="function">
    <text evidence="2 3 4">Key player in the regulation of energy balance and body weight control. Once released into the circulation, has central and peripheral effects by binding LEPR, found in many tissues, which results in the activation of several major signaling pathways (By similarity). In the hypothalamus, acts as an appetite-regulating factor that induces a decrease in food intake and an increase in energy consumption by inducing anorexinogenic factors and suppressing orexigenic neuropeptides, also regulates bone mass and secretion of hypothalamo-pituitary-adrenal hormones. In the periphery, increases basal metabolism, influences reproductive function, regulates pancreatic beta-cell function and insulin secretion, is pro-angiogenic for endothelial cell and affects innate and adaptive immunity (By similarity). In the arcuate nucleus of the hypothalamus, activates by depolarization POMC neurons inducing FOS and SOCS3 expression to release anorexigenic peptides and inhibits by hyperpolarization NPY neurons inducing SOCS3 with a consequent reduction on release of orexigenic peptides (By similarity). In addition to its known satiety inducing effect, has a modulatory role in nutrient absorption. In the intestine, reduces glucose absorption by enterocytes by activating PKC and leading to a sequential activation of p38, PI3K and ERK signaling pathways which exerts an inhibitory effect on glucose absorption (By similarity). Acts as a growth factor on certain tissues, through the activation of different signaling pathways increases expression of genes involved in cell cycle regulation such as CCND1, via JAK2-STAT3 pathway, or VEGFA, via MAPK1/3 and PI3K-AKT1 pathways (By similarity). May also play an apoptotic role via JAK2-STAT3 pathway and up-regulation of BIRC5 expression. Pro-angiogenic, has mitogenic activity on vascular endothelial cells and plays a role in matrix remodeling by regulating the expression of matrix metalloproteinases (MMPs) and tissue inhibitors of metalloproteinases (TIMPs). In innate immunity, modulates the activity and function of neutrophils by increasing chemotaxis and the secretion of oxygen radicals. Increases phagocytosis by macrophages and enhances secretion of pro-inflammatory mediators. Increases cytotoxic ability of NK cells. Plays a pro-inflammatory role, in synergy with IL1B, by inducing NOS2 which promotes the production of IL6, IL8 and Prostaglandin E2, through a signaling pathway that involves JAK2, PI3K, MAP2K1/MEK1 and MAPK14/p38 (By similarity). In adaptive immunity, promotes the switch of memory T-cells towards T helper-1 cell immune responses (By similarity). Increases CD4(+)CD25(-) T-cell proliferation and reduces autophagy during TCR (T-cell receptor) stimulation, through MTOR signaling pathway activation and BCL2 up-regulation (By similarity).</text>
</comment>
<comment type="subcellular location">
    <subcellularLocation>
        <location evidence="2">Secreted</location>
    </subcellularLocation>
</comment>
<comment type="similarity">
    <text evidence="6">Belongs to the leptin family.</text>
</comment>
<gene>
    <name type="primary">LEP</name>
    <name type="synonym">OB</name>
</gene>
<feature type="signal peptide" evidence="5">
    <location>
        <begin position="1"/>
        <end position="21"/>
    </location>
</feature>
<feature type="chain" id="PRO_0000017680" description="Leptin">
    <location>
        <begin position="22"/>
        <end position="167"/>
    </location>
</feature>
<feature type="disulfide bond" evidence="1">
    <location>
        <begin position="117"/>
        <end position="167"/>
    </location>
</feature>
<proteinExistence type="inferred from homology"/>
<reference key="1">
    <citation type="journal article" date="2004" name="Anim. Genet.">
        <title>Molecular cloning and analysis of the swamp and river buffalo leptin gene.</title>
        <authorList>
            <person name="Vallinoto M."/>
            <person name="Schneider M.P."/>
            <person name="Silva A."/>
            <person name="Iannuzzi L."/>
            <person name="Brenig B."/>
        </authorList>
    </citation>
    <scope>NUCLEOTIDE SEQUENCE [GENOMIC DNA]</scope>
</reference>
<sequence>MRCGPLYQFLWLWPYLSYVEAVPIRKVQDDTKTLIKTIVTRINDISHTQSVSSKQRVTGLDFIPGLHPLLSLSKMDQTLAIYQQILTSLPSRNVVQISNDLENLRDLLHLLAASKSCPLPQVRALESLESLGVVLEASLYSTEVVALSRLQGSLQDMLRQLDLSPGC</sequence>
<evidence type="ECO:0000250" key="1"/>
<evidence type="ECO:0000250" key="2">
    <source>
        <dbReference type="UniProtKB" id="P41159"/>
    </source>
</evidence>
<evidence type="ECO:0000250" key="3">
    <source>
        <dbReference type="UniProtKB" id="P41160"/>
    </source>
</evidence>
<evidence type="ECO:0000250" key="4">
    <source>
        <dbReference type="UniProtKB" id="P50596"/>
    </source>
</evidence>
<evidence type="ECO:0000255" key="5"/>
<evidence type="ECO:0000305" key="6"/>
<dbReference type="EMBL" id="AY495587">
    <property type="protein sequence ID" value="AAS86311.1"/>
    <property type="molecule type" value="Genomic_DNA"/>
</dbReference>
<dbReference type="RefSeq" id="NP_001277830.1">
    <property type="nucleotide sequence ID" value="NM_001290901.1"/>
</dbReference>
<dbReference type="SMR" id="Q5J732"/>
<dbReference type="GeneID" id="102401642"/>
<dbReference type="CTD" id="3952"/>
<dbReference type="OrthoDB" id="9872512at2759"/>
<dbReference type="GO" id="GO:0005615">
    <property type="term" value="C:extracellular space"/>
    <property type="evidence" value="ECO:0007669"/>
    <property type="project" value="TreeGrafter"/>
</dbReference>
<dbReference type="GO" id="GO:0005179">
    <property type="term" value="F:hormone activity"/>
    <property type="evidence" value="ECO:0007669"/>
    <property type="project" value="InterPro"/>
</dbReference>
<dbReference type="GO" id="GO:0051428">
    <property type="term" value="F:peptide hormone receptor binding"/>
    <property type="evidence" value="ECO:0007669"/>
    <property type="project" value="TreeGrafter"/>
</dbReference>
<dbReference type="GO" id="GO:1990051">
    <property type="term" value="P:activation of protein kinase C activity"/>
    <property type="evidence" value="ECO:0000250"/>
    <property type="project" value="UniProtKB"/>
</dbReference>
<dbReference type="GO" id="GO:0098868">
    <property type="term" value="P:bone growth"/>
    <property type="evidence" value="ECO:0000250"/>
    <property type="project" value="UniProtKB"/>
</dbReference>
<dbReference type="GO" id="GO:0044320">
    <property type="term" value="P:cellular response to leptin stimulus"/>
    <property type="evidence" value="ECO:0000250"/>
    <property type="project" value="UniProtKB"/>
</dbReference>
<dbReference type="GO" id="GO:0006112">
    <property type="term" value="P:energy reserve metabolic process"/>
    <property type="evidence" value="ECO:0007669"/>
    <property type="project" value="TreeGrafter"/>
</dbReference>
<dbReference type="GO" id="GO:0050892">
    <property type="term" value="P:intestinal absorption"/>
    <property type="evidence" value="ECO:0000250"/>
    <property type="project" value="UniProtKB"/>
</dbReference>
<dbReference type="GO" id="GO:0033210">
    <property type="term" value="P:leptin-mediated signaling pathway"/>
    <property type="evidence" value="ECO:0000250"/>
    <property type="project" value="UniProtKB"/>
</dbReference>
<dbReference type="GO" id="GO:0006629">
    <property type="term" value="P:lipid metabolic process"/>
    <property type="evidence" value="ECO:0007669"/>
    <property type="project" value="TreeGrafter"/>
</dbReference>
<dbReference type="GO" id="GO:0038108">
    <property type="term" value="P:negative regulation of appetite by leptin-mediated signaling pathway"/>
    <property type="evidence" value="ECO:0000250"/>
    <property type="project" value="UniProtKB"/>
</dbReference>
<dbReference type="GO" id="GO:0010507">
    <property type="term" value="P:negative regulation of autophagy"/>
    <property type="evidence" value="ECO:0000250"/>
    <property type="project" value="UniProtKB"/>
</dbReference>
<dbReference type="GO" id="GO:0046325">
    <property type="term" value="P:negative regulation of D-glucose import"/>
    <property type="evidence" value="ECO:0000250"/>
    <property type="project" value="UniProtKB"/>
</dbReference>
<dbReference type="GO" id="GO:0006909">
    <property type="term" value="P:phagocytosis"/>
    <property type="evidence" value="ECO:0000250"/>
    <property type="project" value="UniProtKB"/>
</dbReference>
<dbReference type="GO" id="GO:0032735">
    <property type="term" value="P:positive regulation of interleukin-12 production"/>
    <property type="evidence" value="ECO:0000250"/>
    <property type="project" value="UniProtKB"/>
</dbReference>
<dbReference type="GO" id="GO:0032755">
    <property type="term" value="P:positive regulation of interleukin-6 production"/>
    <property type="evidence" value="ECO:0000250"/>
    <property type="project" value="UniProtKB"/>
</dbReference>
<dbReference type="GO" id="GO:0032757">
    <property type="term" value="P:positive regulation of interleukin-8 production"/>
    <property type="evidence" value="ECO:0000250"/>
    <property type="project" value="UniProtKB"/>
</dbReference>
<dbReference type="GO" id="GO:0043410">
    <property type="term" value="P:positive regulation of MAPK cascade"/>
    <property type="evidence" value="ECO:0000250"/>
    <property type="project" value="UniProtKB"/>
</dbReference>
<dbReference type="GO" id="GO:1900745">
    <property type="term" value="P:positive regulation of p38MAPK cascade"/>
    <property type="evidence" value="ECO:0000250"/>
    <property type="project" value="UniProtKB"/>
</dbReference>
<dbReference type="GO" id="GO:0051897">
    <property type="term" value="P:positive regulation of phosphatidylinositol 3-kinase/protein kinase B signal transduction"/>
    <property type="evidence" value="ECO:0000250"/>
    <property type="project" value="UniProtKB"/>
</dbReference>
<dbReference type="GO" id="GO:0046427">
    <property type="term" value="P:positive regulation of receptor signaling pathway via JAK-STAT"/>
    <property type="evidence" value="ECO:0000250"/>
    <property type="project" value="UniProtKB"/>
</dbReference>
<dbReference type="GO" id="GO:0042102">
    <property type="term" value="P:positive regulation of T cell proliferation"/>
    <property type="evidence" value="ECO:0000250"/>
    <property type="project" value="UniProtKB"/>
</dbReference>
<dbReference type="GO" id="GO:0032008">
    <property type="term" value="P:positive regulation of TOR signaling"/>
    <property type="evidence" value="ECO:0000250"/>
    <property type="project" value="UniProtKB"/>
</dbReference>
<dbReference type="GO" id="GO:0032760">
    <property type="term" value="P:positive regulation of tumor necrosis factor production"/>
    <property type="evidence" value="ECO:0000250"/>
    <property type="project" value="UniProtKB"/>
</dbReference>
<dbReference type="GO" id="GO:0032310">
    <property type="term" value="P:prostaglandin secretion"/>
    <property type="evidence" value="ECO:0000250"/>
    <property type="project" value="UniProtKB"/>
</dbReference>
<dbReference type="GO" id="GO:0045765">
    <property type="term" value="P:regulation of angiogenesis"/>
    <property type="evidence" value="ECO:0000250"/>
    <property type="project" value="UniProtKB"/>
</dbReference>
<dbReference type="GO" id="GO:0046850">
    <property type="term" value="P:regulation of bone remodeling"/>
    <property type="evidence" value="ECO:0000250"/>
    <property type="project" value="UniProtKB"/>
</dbReference>
<dbReference type="GO" id="GO:0090335">
    <property type="term" value="P:regulation of brown fat cell differentiation"/>
    <property type="evidence" value="ECO:0000250"/>
    <property type="project" value="UniProtKB"/>
</dbReference>
<dbReference type="GO" id="GO:0051726">
    <property type="term" value="P:regulation of cell cycle"/>
    <property type="evidence" value="ECO:0000250"/>
    <property type="project" value="UniProtKB"/>
</dbReference>
<dbReference type="GO" id="GO:1900015">
    <property type="term" value="P:regulation of cytokine production involved in inflammatory response"/>
    <property type="evidence" value="ECO:0000250"/>
    <property type="project" value="UniProtKB"/>
</dbReference>
<dbReference type="GO" id="GO:0001936">
    <property type="term" value="P:regulation of endothelial cell proliferation"/>
    <property type="evidence" value="ECO:0000250"/>
    <property type="project" value="UniProtKB"/>
</dbReference>
<dbReference type="GO" id="GO:0032814">
    <property type="term" value="P:regulation of natural killer cell activation"/>
    <property type="evidence" value="ECO:0000250"/>
    <property type="project" value="UniProtKB"/>
</dbReference>
<dbReference type="GO" id="GO:0042269">
    <property type="term" value="P:regulation of natural killer cell mediated cytotoxicity"/>
    <property type="evidence" value="ECO:0000250"/>
    <property type="project" value="UniProtKB"/>
</dbReference>
<dbReference type="GO" id="GO:0032817">
    <property type="term" value="P:regulation of natural killer cell proliferation"/>
    <property type="evidence" value="ECO:0000250"/>
    <property type="project" value="UniProtKB"/>
</dbReference>
<dbReference type="GO" id="GO:0050999">
    <property type="term" value="P:regulation of nitric-oxide synthase activity"/>
    <property type="evidence" value="ECO:0000250"/>
    <property type="project" value="UniProtKB"/>
</dbReference>
<dbReference type="GO" id="GO:0032868">
    <property type="term" value="P:response to insulin"/>
    <property type="evidence" value="ECO:0000250"/>
    <property type="project" value="AgBase"/>
</dbReference>
<dbReference type="GO" id="GO:0019953">
    <property type="term" value="P:sexual reproduction"/>
    <property type="evidence" value="ECO:0000250"/>
    <property type="project" value="UniProtKB"/>
</dbReference>
<dbReference type="GO" id="GO:0030217">
    <property type="term" value="P:T cell differentiation"/>
    <property type="evidence" value="ECO:0000250"/>
    <property type="project" value="UniProtKB"/>
</dbReference>
<dbReference type="FunFam" id="1.20.1250.10:FF:000008">
    <property type="entry name" value="Leptin"/>
    <property type="match status" value="1"/>
</dbReference>
<dbReference type="Gene3D" id="1.20.1250.10">
    <property type="match status" value="1"/>
</dbReference>
<dbReference type="InterPro" id="IPR009079">
    <property type="entry name" value="4_helix_cytokine-like_core"/>
</dbReference>
<dbReference type="InterPro" id="IPR000065">
    <property type="entry name" value="Leptin"/>
</dbReference>
<dbReference type="PANTHER" id="PTHR11724">
    <property type="entry name" value="LEPTIN"/>
    <property type="match status" value="1"/>
</dbReference>
<dbReference type="PANTHER" id="PTHR11724:SF1">
    <property type="entry name" value="LEPTIN"/>
    <property type="match status" value="1"/>
</dbReference>
<dbReference type="Pfam" id="PF02024">
    <property type="entry name" value="Leptin"/>
    <property type="match status" value="1"/>
</dbReference>
<dbReference type="PIRSF" id="PIRSF001837">
    <property type="entry name" value="Leptin"/>
    <property type="match status" value="1"/>
</dbReference>
<dbReference type="PRINTS" id="PR00495">
    <property type="entry name" value="LEPTIN"/>
</dbReference>
<dbReference type="SUPFAM" id="SSF47266">
    <property type="entry name" value="4-helical cytokines"/>
    <property type="match status" value="1"/>
</dbReference>
<keyword id="KW-1015">Disulfide bond</keyword>
<keyword id="KW-0550">Obesity</keyword>
<keyword id="KW-0964">Secreted</keyword>
<keyword id="KW-0732">Signal</keyword>
<protein>
    <recommendedName>
        <fullName>Leptin</fullName>
    </recommendedName>
    <alternativeName>
        <fullName>Obesity factor</fullName>
    </alternativeName>
</protein>
<accession>Q5J732</accession>
<name>LEP_BUBBU</name>
<organism>
    <name type="scientific">Bubalus bubalis</name>
    <name type="common">Domestic water buffalo</name>
    <dbReference type="NCBI Taxonomy" id="89462"/>
    <lineage>
        <taxon>Eukaryota</taxon>
        <taxon>Metazoa</taxon>
        <taxon>Chordata</taxon>
        <taxon>Craniata</taxon>
        <taxon>Vertebrata</taxon>
        <taxon>Euteleostomi</taxon>
        <taxon>Mammalia</taxon>
        <taxon>Eutheria</taxon>
        <taxon>Laurasiatheria</taxon>
        <taxon>Artiodactyla</taxon>
        <taxon>Ruminantia</taxon>
        <taxon>Pecora</taxon>
        <taxon>Bovidae</taxon>
        <taxon>Bovinae</taxon>
        <taxon>Bubalus</taxon>
    </lineage>
</organism>